<organism>
    <name type="scientific">Bacillus velezensis (strain DSM 23117 / BGSC 10A6 / LMG 26770 / FZB42)</name>
    <name type="common">Bacillus amyloliquefaciens subsp. plantarum</name>
    <dbReference type="NCBI Taxonomy" id="326423"/>
    <lineage>
        <taxon>Bacteria</taxon>
        <taxon>Bacillati</taxon>
        <taxon>Bacillota</taxon>
        <taxon>Bacilli</taxon>
        <taxon>Bacillales</taxon>
        <taxon>Bacillaceae</taxon>
        <taxon>Bacillus</taxon>
        <taxon>Bacillus amyloliquefaciens group</taxon>
    </lineage>
</organism>
<name>COXX1_BACVZ</name>
<gene>
    <name evidence="1" type="primary">ctaB1</name>
    <name type="synonym">ctaO</name>
    <name type="ordered locus">RBAM_008440</name>
</gene>
<dbReference type="EC" id="2.5.1.141" evidence="1"/>
<dbReference type="EMBL" id="CP000560">
    <property type="protein sequence ID" value="ABS73228.1"/>
    <property type="molecule type" value="Genomic_DNA"/>
</dbReference>
<dbReference type="SMR" id="A7Z2K2"/>
<dbReference type="GeneID" id="93079977"/>
<dbReference type="KEGG" id="bay:RBAM_008440"/>
<dbReference type="HOGENOM" id="CLU_029631_0_0_9"/>
<dbReference type="UniPathway" id="UPA00834">
    <property type="reaction ID" value="UER00712"/>
</dbReference>
<dbReference type="Proteomes" id="UP000001120">
    <property type="component" value="Chromosome"/>
</dbReference>
<dbReference type="GO" id="GO:0005886">
    <property type="term" value="C:plasma membrane"/>
    <property type="evidence" value="ECO:0007669"/>
    <property type="project" value="UniProtKB-SubCell"/>
</dbReference>
<dbReference type="GO" id="GO:0008495">
    <property type="term" value="F:protoheme IX farnesyltransferase activity"/>
    <property type="evidence" value="ECO:0007669"/>
    <property type="project" value="UniProtKB-UniRule"/>
</dbReference>
<dbReference type="GO" id="GO:0048034">
    <property type="term" value="P:heme O biosynthetic process"/>
    <property type="evidence" value="ECO:0007669"/>
    <property type="project" value="UniProtKB-UniRule"/>
</dbReference>
<dbReference type="CDD" id="cd13957">
    <property type="entry name" value="PT_UbiA_Cox10"/>
    <property type="match status" value="1"/>
</dbReference>
<dbReference type="Gene3D" id="1.10.357.140">
    <property type="entry name" value="UbiA prenyltransferase"/>
    <property type="match status" value="1"/>
</dbReference>
<dbReference type="HAMAP" id="MF_00154">
    <property type="entry name" value="CyoE_CtaB"/>
    <property type="match status" value="1"/>
</dbReference>
<dbReference type="InterPro" id="IPR006369">
    <property type="entry name" value="Protohaem_IX_farnesylTrfase"/>
</dbReference>
<dbReference type="InterPro" id="IPR000537">
    <property type="entry name" value="UbiA_prenyltransferase"/>
</dbReference>
<dbReference type="InterPro" id="IPR030470">
    <property type="entry name" value="UbiA_prenylTrfase_CS"/>
</dbReference>
<dbReference type="InterPro" id="IPR044878">
    <property type="entry name" value="UbiA_sf"/>
</dbReference>
<dbReference type="NCBIfam" id="TIGR01473">
    <property type="entry name" value="cyoE_ctaB"/>
    <property type="match status" value="1"/>
</dbReference>
<dbReference type="PANTHER" id="PTHR43448">
    <property type="entry name" value="PROTOHEME IX FARNESYLTRANSFERASE, MITOCHONDRIAL"/>
    <property type="match status" value="1"/>
</dbReference>
<dbReference type="PANTHER" id="PTHR43448:SF2">
    <property type="entry name" value="PROTOHEME IX FARNESYLTRANSFERASE, MITOCHONDRIAL"/>
    <property type="match status" value="1"/>
</dbReference>
<dbReference type="Pfam" id="PF01040">
    <property type="entry name" value="UbiA"/>
    <property type="match status" value="1"/>
</dbReference>
<dbReference type="PROSITE" id="PS00943">
    <property type="entry name" value="UBIA"/>
    <property type="match status" value="1"/>
</dbReference>
<reference key="1">
    <citation type="journal article" date="2007" name="Nat. Biotechnol.">
        <title>Comparative analysis of the complete genome sequence of the plant growth-promoting bacterium Bacillus amyloliquefaciens FZB42.</title>
        <authorList>
            <person name="Chen X.H."/>
            <person name="Koumoutsi A."/>
            <person name="Scholz R."/>
            <person name="Eisenreich A."/>
            <person name="Schneider K."/>
            <person name="Heinemeyer I."/>
            <person name="Morgenstern B."/>
            <person name="Voss B."/>
            <person name="Hess W.R."/>
            <person name="Reva O."/>
            <person name="Junge H."/>
            <person name="Voigt B."/>
            <person name="Jungblut P.R."/>
            <person name="Vater J."/>
            <person name="Suessmuth R."/>
            <person name="Liesegang H."/>
            <person name="Strittmatter A."/>
            <person name="Gottschalk G."/>
            <person name="Borriss R."/>
        </authorList>
    </citation>
    <scope>NUCLEOTIDE SEQUENCE [LARGE SCALE GENOMIC DNA]</scope>
    <source>
        <strain>DSM 23117 / BGSC 10A6 / LMG 26770 / FZB42</strain>
    </source>
</reference>
<sequence length="315" mass="34529">MNSNAAQTEQPMKHNGNRMTVKDFIILAKPGIIISNSLAALGGFWIAWIQSERTGGGPGIFAAMAVAMIGTALVMASSTVFNNFFDRGMDAKMARTRTRASVTGKIPPPVMILYGTCLGACGFIMLASLNVLTAVLGLLAFLLYAVVYTLWFKRHSVLSTFVGSFPGAAPPLIGYCALTGYIDMPAILLYAIMFLWQPPHFWAIGIRRKEEYRAAGIPLLPIIKGNRATKIKMLRYTAVLTAVSLLVPLYIDVSPFYTASALLLGAIWLYRSVKGFQAADDTQWSKGMFFYSIVYFSLLFLILMADSFINAVLRT</sequence>
<accession>A7Z2K2</accession>
<comment type="function">
    <text evidence="1">Converts heme B (protoheme IX) to heme O by substitution of the vinyl group on carbon 2 of heme B porphyrin ring with a hydroxyethyl farnesyl side group.</text>
</comment>
<comment type="catalytic activity">
    <reaction evidence="1">
        <text>heme b + (2E,6E)-farnesyl diphosphate + H2O = Fe(II)-heme o + diphosphate</text>
        <dbReference type="Rhea" id="RHEA:28070"/>
        <dbReference type="ChEBI" id="CHEBI:15377"/>
        <dbReference type="ChEBI" id="CHEBI:33019"/>
        <dbReference type="ChEBI" id="CHEBI:60344"/>
        <dbReference type="ChEBI" id="CHEBI:60530"/>
        <dbReference type="ChEBI" id="CHEBI:175763"/>
        <dbReference type="EC" id="2.5.1.141"/>
    </reaction>
</comment>
<comment type="pathway">
    <text evidence="1">Porphyrin-containing compound metabolism; heme O biosynthesis; heme O from protoheme: step 1/1.</text>
</comment>
<comment type="subunit">
    <text evidence="1">Interacts with CtaA.</text>
</comment>
<comment type="subcellular location">
    <subcellularLocation>
        <location evidence="1">Cell membrane</location>
        <topology evidence="1">Multi-pass membrane protein</topology>
    </subcellularLocation>
</comment>
<comment type="miscellaneous">
    <text evidence="1">Carbon 2 of the heme B porphyrin ring is defined according to the Fischer nomenclature.</text>
</comment>
<comment type="similarity">
    <text evidence="1">Belongs to the UbiA prenyltransferase family. Protoheme IX farnesyltransferase subfamily.</text>
</comment>
<proteinExistence type="inferred from homology"/>
<protein>
    <recommendedName>
        <fullName evidence="1">Protoheme IX farnesyltransferase 1</fullName>
        <ecNumber evidence="1">2.5.1.141</ecNumber>
    </recommendedName>
    <alternativeName>
        <fullName evidence="1">Heme B farnesyltransferase 1</fullName>
    </alternativeName>
    <alternativeName>
        <fullName evidence="1">Heme O synthase 1</fullName>
    </alternativeName>
</protein>
<keyword id="KW-1003">Cell membrane</keyword>
<keyword id="KW-0350">Heme biosynthesis</keyword>
<keyword id="KW-0472">Membrane</keyword>
<keyword id="KW-0808">Transferase</keyword>
<keyword id="KW-0812">Transmembrane</keyword>
<keyword id="KW-1133">Transmembrane helix</keyword>
<evidence type="ECO:0000255" key="1">
    <source>
        <dbReference type="HAMAP-Rule" id="MF_00154"/>
    </source>
</evidence>
<feature type="chain" id="PRO_0000326999" description="Protoheme IX farnesyltransferase 1">
    <location>
        <begin position="1"/>
        <end position="315"/>
    </location>
</feature>
<feature type="transmembrane region" description="Helical" evidence="1">
    <location>
        <begin position="30"/>
        <end position="50"/>
    </location>
</feature>
<feature type="transmembrane region" description="Helical" evidence="1">
    <location>
        <begin position="56"/>
        <end position="76"/>
    </location>
</feature>
<feature type="transmembrane region" description="Helical" evidence="1">
    <location>
        <begin position="106"/>
        <end position="126"/>
    </location>
</feature>
<feature type="transmembrane region" description="Helical" evidence="1">
    <location>
        <begin position="132"/>
        <end position="152"/>
    </location>
</feature>
<feature type="transmembrane region" description="Helical" evidence="1">
    <location>
        <begin position="162"/>
        <end position="182"/>
    </location>
</feature>
<feature type="transmembrane region" description="Helical" evidence="1">
    <location>
        <begin position="186"/>
        <end position="206"/>
    </location>
</feature>
<feature type="transmembrane region" description="Helical" evidence="1">
    <location>
        <begin position="249"/>
        <end position="269"/>
    </location>
</feature>
<feature type="transmembrane region" description="Helical" evidence="1">
    <location>
        <begin position="289"/>
        <end position="309"/>
    </location>
</feature>